<gene>
    <name evidence="11 13" type="primary">Kcnk9</name>
    <name evidence="11" type="synonym">Task3</name>
</gene>
<comment type="function">
    <text evidence="2 3 5 8 9 10">K(+) channel that conducts voltage-dependent outward rectifying currents upon membrane depolarization. Voltage sensing is coupled to K(+) electrochemical gradient in an 'ion flux gating' mode where outward but not inward ion flow opens the gate (By similarity) (PubMed:10734076, PubMed:11875121, PubMed:14678492, PubMed:15282272). Changes ion selectivity and becomes permeable to Na(+) ions in response to extracellular acidification. Protonation of the pH sensor His-98 stabilizes C-type inactivation conformation likely converting the channel from outward K(+)-conducting, to inward Na(+)-conducting to nonconductive state (By similarity). Homo- and heterodimerizes to form functional channels with distinct regulatory and gating properties (PubMed:14678492, PubMed:15282272). Allows K(+) currents with fast-gating kinetics important for the repolarization and hyperpolarization phases of action potentials (By similarity). In granule neurons, hyperpolarizes the resting membrane potential to limit intrinsic neuronal excitability, but once the action potential threshold is reached, supports high-frequency action potential firing and increased neuronal excitability. Homomeric and/or heteromeric KCNK3:KCNK9 channels operate in cerebellar granule cells, whereas heteromeric KCNK1:KCNK9 enables currents in hippocampal dentate gyrus granule neurons (By similarity) (PubMed:14678492). Dispensable for central chemosensory respiration i.e. breathing controlled by brainstem CO2/pH, it rather conducts pH-sensitive currents and controls the firing rate of serotonergic raphe neurons involved in potentiation of the respiratory chemoreflex (By similarity). In retinal ganglion cells, mediates outward rectifying currents that regulate action potentials in response to acidification of the synaptic cleft. Involved in transmission of image-forming and nonimage-forming visual information in the retina (By similarity). In adrenal gland, contributes to the maintenance of a hyperpolarized resting membrane potential of aldosterone-producing cells at zona glomerulosa and limits aldosterone release as part of a regulatory mechanism that controls arterial blood pressure and electrolyte homeostasis (By similarity).</text>
</comment>
<comment type="catalytic activity">
    <reaction evidence="5 8 9 10">
        <text>K(+)(in) = K(+)(out)</text>
        <dbReference type="Rhea" id="RHEA:29463"/>
        <dbReference type="ChEBI" id="CHEBI:29103"/>
    </reaction>
</comment>
<comment type="catalytic activity">
    <reaction evidence="3">
        <text>Na(+)(in) = Na(+)(out)</text>
        <dbReference type="Rhea" id="RHEA:34963"/>
        <dbReference type="ChEBI" id="CHEBI:29101"/>
    </reaction>
</comment>
<comment type="activity regulation">
    <text evidence="5 8 9 10">Activated by halothane and isoflurane. Inhibited by external acidification, diacylglycerol, anandamide and AGT/angiotensin II. Ruthenium red inhibits homomeric but not KCNK3:KCNK9 heteromeric channels.</text>
</comment>
<comment type="subunit">
    <text evidence="3 10">Homodimer. Heterodimer with KCNK1 (By similarity). Heterodimer with KCNK3 (PubMed:15282272).</text>
</comment>
<comment type="subcellular location">
    <subcellularLocation>
        <location evidence="2">Cell membrane</location>
        <topology evidence="4">Multi-pass membrane protein</topology>
    </subcellularLocation>
    <subcellularLocation>
        <location evidence="2">Mitochondrion inner membrane</location>
        <topology evidence="4">Multi-pass membrane protein</topology>
    </subcellularLocation>
    <subcellularLocation>
        <location evidence="2">Cell projection</location>
        <location evidence="2">Dendrite</location>
    </subcellularLocation>
    <text evidence="2">Colocalizes with MAP2 in the soma and proximal dendrites of dentate gyrus granule cells.</text>
</comment>
<comment type="tissue specificity">
    <text evidence="5 6 7 8 10">Highly expressed in the CNS and at lower levels in the colon, kidney, liver, lung, spleen, stomach and skeletal muscle. The highest expression was found in the olfactory nuclei, piriform cortex, cerebellum, antedorsal thalmic nucleus, pontine nucleus, dorsal raphe and several nuclei in the medulla. Shows a non-homogeneous distribution in the hippocampus. Expressed at highest levels in the lateral posterior and inferior portions and at medium levels in neocortex. Expressed in motoneurons, including hypoglossal motoneurons (at protein level).</text>
</comment>
<comment type="domain">
    <text evidence="3">Each subunit contributes two pore-forming domains 1 and 2 which assemble to form a single pore with M2 and M4 transmembrane helices lining the central cavity and M1 and M3 facing the lipid bilayer. The transmembrane helices are bridged by the selectivity filters 1 and 2 carrying a signature sequence TxTTxG(Y/F)G(D/H) that coordinate the permeant ions. Up to four ions can simultaneously occupy the selectivity filter and at least two elementary charges must translocate across the filter to convert it into the open conformation.</text>
</comment>
<comment type="domain">
    <text evidence="3">The X-gate is positioned at the distal ends of M4 transmembrane helices forming a two-turn-helical structure with the methyl group of Thr-248 closing the ion conduction pathway.</text>
</comment>
<comment type="similarity">
    <text evidence="12">Belongs to the two pore domain potassium channel (TC 1.A.1.8) family.</text>
</comment>
<comment type="sequence caution" evidence="12">
    <conflict type="frameshift">
        <sequence resource="EMBL-CDS" id="AAF60229"/>
    </conflict>
</comment>
<reference key="1">
    <citation type="journal article" date="2000" name="J. Biol. Chem.">
        <title>TASK-3, a new member of the tandem pore K+ channel family.</title>
        <authorList>
            <person name="Kim Y."/>
            <person name="Bang H."/>
            <person name="Kim D."/>
        </authorList>
    </citation>
    <scope>NUCLEOTIDE SEQUENCE [MRNA]</scope>
    <scope>FUNCTION</scope>
    <scope>TRANSPORTER ACTIVITY</scope>
    <scope>ACTIVITY REGULATION</scope>
    <scope>TISSUE SPECIFICITY</scope>
    <scope>MUTAGENESIS OF HIS-98</scope>
    <source>
        <strain>Sprague-Dawley</strain>
        <tissue>Cerebellum</tissue>
    </source>
</reference>
<reference key="2">
    <citation type="journal article" date="2002" name="Mol. Endocrinol.">
        <title>TASK-3 dominates the background potassium conductance in rat adrenal glomerulosa cells.</title>
        <authorList>
            <person name="Czirjak G."/>
            <person name="Enyedi P."/>
        </authorList>
    </citation>
    <scope>NUCLEOTIDE SEQUENCE [MRNA]</scope>
    <scope>FUNCTION</scope>
    <scope>TRANSPORTER ACTIVITY</scope>
    <scope>ACTIVITY REGULATION</scope>
    <scope>TISSUE SPECIFICITY</scope>
    <source>
        <strain>Wistar</strain>
    </source>
</reference>
<reference key="3">
    <citation type="journal article" date="2001" name="J. Neurophysiol.">
        <title>KT3.2 and KT3.3, two novel human two-pore K(+) channels closely related to TASK-1.</title>
        <authorList>
            <person name="Vega-Saenz de Miera E."/>
            <person name="Lau D.H.P."/>
            <person name="Zhadina M."/>
            <person name="Pountney D."/>
            <person name="Coetzee W.A."/>
            <person name="Rudy B."/>
        </authorList>
    </citation>
    <scope>NUCLEOTIDE SEQUENCE [MRNA] OF 1-237</scope>
    <scope>TISSUE SPECIFICITY</scope>
    <source>
        <strain>Sprague-Dawley</strain>
    </source>
</reference>
<reference key="4">
    <citation type="journal article" date="2001" name="Mol. Cell. Neurosci.">
        <title>Expression pattern in brain of TASK-1, TASK-3, and a tandem pore domain K(+) channel subunit, TASK-5, associated with the central auditory nervous system.</title>
        <authorList>
            <person name="Karschin C."/>
            <person name="Wischmeyer E."/>
            <person name="Preisig-Mueller R."/>
            <person name="Rajan S."/>
            <person name="Derst C."/>
            <person name="Grzeschik K.-H."/>
            <person name="Daut J."/>
            <person name="Karschin A."/>
        </authorList>
    </citation>
    <scope>TISSUE SPECIFICITY</scope>
</reference>
<reference key="5">
    <citation type="journal article" date="2004" name="J. Neurosci.">
        <title>Motoneurons express heteromeric TWIK-related acid-sensitive K+ (TASK) channels containing TASK-1 (KCNK3) and TASK-3 (KCNK9) subunits.</title>
        <authorList>
            <person name="Berg A.P."/>
            <person name="Talley E.M."/>
            <person name="Manger J.P."/>
            <person name="Bayliss D.A."/>
        </authorList>
    </citation>
    <scope>FUNCTION</scope>
    <scope>TRANSPORTER ACTIVITY</scope>
    <scope>ACTIVITY REGULATION</scope>
    <scope>INTERACTION WITH KCNK3</scope>
    <scope>TISSUE SPECIFICITY</scope>
    <scope>MUTAGENESIS OF TYR-191</scope>
</reference>
<reference key="6">
    <citation type="journal article" date="2004" name="J. Physiol. (Lond.)">
        <title>Functional expression of TASK-1/TASK-3 heteromers in cerebellar granule cells.</title>
        <authorList>
            <person name="Kang D."/>
            <person name="Han J."/>
            <person name="Talley E.M."/>
            <person name="Bayliss D.A."/>
            <person name="Kim D."/>
        </authorList>
    </citation>
    <scope>FUNCTION</scope>
    <scope>TRANSPORTER ACTIVITY</scope>
    <scope>ACTIVITY REGULATION</scope>
</reference>
<dbReference type="EMBL" id="AF192366">
    <property type="protein sequence ID" value="AAF60229.1"/>
    <property type="status" value="ALT_FRAME"/>
    <property type="molecule type" value="mRNA"/>
</dbReference>
<dbReference type="EMBL" id="AF391084">
    <property type="protein sequence ID" value="AAK69764.1"/>
    <property type="molecule type" value="mRNA"/>
</dbReference>
<dbReference type="EMBL" id="AF257082">
    <property type="protein sequence ID" value="AAG33128.1"/>
    <property type="molecule type" value="mRNA"/>
</dbReference>
<dbReference type="RefSeq" id="NP_445857.2">
    <property type="nucleotide sequence ID" value="NM_053405.2"/>
</dbReference>
<dbReference type="RefSeq" id="XP_017450625.1">
    <property type="nucleotide sequence ID" value="XM_017595136.3"/>
</dbReference>
<dbReference type="SMR" id="Q9ES08"/>
<dbReference type="CORUM" id="Q9ES08"/>
<dbReference type="DIP" id="DIP-61122N"/>
<dbReference type="FunCoup" id="Q9ES08">
    <property type="interactions" value="116"/>
</dbReference>
<dbReference type="IntAct" id="Q9ES08">
    <property type="interactions" value="1"/>
</dbReference>
<dbReference type="STRING" id="10116.ENSRNOP00000012408"/>
<dbReference type="BindingDB" id="Q9ES08"/>
<dbReference type="ChEMBL" id="CHEMBL4295"/>
<dbReference type="DrugCentral" id="Q9ES08"/>
<dbReference type="GlyCosmos" id="Q9ES08">
    <property type="glycosylation" value="1 site, No reported glycans"/>
</dbReference>
<dbReference type="GlyGen" id="Q9ES08">
    <property type="glycosylation" value="2 sites"/>
</dbReference>
<dbReference type="PhosphoSitePlus" id="Q9ES08"/>
<dbReference type="PaxDb" id="10116-ENSRNOP00000012408"/>
<dbReference type="Ensembl" id="ENSRNOT00000012408.4">
    <property type="protein sequence ID" value="ENSRNOP00000012408.1"/>
    <property type="gene ID" value="ENSRNOG00000009265.5"/>
</dbReference>
<dbReference type="GeneID" id="84429"/>
<dbReference type="KEGG" id="rno:84429"/>
<dbReference type="UCSC" id="RGD:621451">
    <property type="organism name" value="rat"/>
</dbReference>
<dbReference type="AGR" id="RGD:621451"/>
<dbReference type="CTD" id="51305"/>
<dbReference type="RGD" id="621451">
    <property type="gene designation" value="Kcnk9"/>
</dbReference>
<dbReference type="eggNOG" id="KOG4404">
    <property type="taxonomic scope" value="Eukaryota"/>
</dbReference>
<dbReference type="GeneTree" id="ENSGT00940000159791"/>
<dbReference type="HOGENOM" id="CLU_022504_4_0_1"/>
<dbReference type="InParanoid" id="Q9ES08"/>
<dbReference type="OMA" id="RSAPFCA"/>
<dbReference type="OrthoDB" id="297496at2759"/>
<dbReference type="PhylomeDB" id="Q9ES08"/>
<dbReference type="TreeFam" id="TF313947"/>
<dbReference type="Reactome" id="R-RNO-1299316">
    <property type="pathway name" value="TWIK-releated acid-sensitive K+ channel (TASK)"/>
</dbReference>
<dbReference type="Reactome" id="R-RNO-5576886">
    <property type="pathway name" value="Phase 4 - resting membrane potential"/>
</dbReference>
<dbReference type="PRO" id="PR:Q9ES08"/>
<dbReference type="Proteomes" id="UP000002494">
    <property type="component" value="Chromosome 7"/>
</dbReference>
<dbReference type="Bgee" id="ENSRNOG00000009265">
    <property type="expression patterns" value="Expressed in frontal cortex and 1 other cell type or tissue"/>
</dbReference>
<dbReference type="GO" id="GO:0030425">
    <property type="term" value="C:dendrite"/>
    <property type="evidence" value="ECO:0007669"/>
    <property type="project" value="UniProtKB-SubCell"/>
</dbReference>
<dbReference type="GO" id="GO:0005743">
    <property type="term" value="C:mitochondrial inner membrane"/>
    <property type="evidence" value="ECO:0000250"/>
    <property type="project" value="UniProtKB"/>
</dbReference>
<dbReference type="GO" id="GO:0034702">
    <property type="term" value="C:monoatomic ion channel complex"/>
    <property type="evidence" value="ECO:0007669"/>
    <property type="project" value="UniProtKB-KW"/>
</dbReference>
<dbReference type="GO" id="GO:0005886">
    <property type="term" value="C:plasma membrane"/>
    <property type="evidence" value="ECO:0000250"/>
    <property type="project" value="UniProtKB"/>
</dbReference>
<dbReference type="GO" id="GO:0008021">
    <property type="term" value="C:synaptic vesicle"/>
    <property type="evidence" value="ECO:0000314"/>
    <property type="project" value="RGD"/>
</dbReference>
<dbReference type="GO" id="GO:0042802">
    <property type="term" value="F:identical protein binding"/>
    <property type="evidence" value="ECO:0000266"/>
    <property type="project" value="RGD"/>
</dbReference>
<dbReference type="GO" id="GO:0046872">
    <property type="term" value="F:metal ion binding"/>
    <property type="evidence" value="ECO:0007669"/>
    <property type="project" value="UniProtKB-KW"/>
</dbReference>
<dbReference type="GO" id="GO:0015271">
    <property type="term" value="F:outward rectifier potassium channel activity"/>
    <property type="evidence" value="ECO:0000250"/>
    <property type="project" value="UniProtKB"/>
</dbReference>
<dbReference type="GO" id="GO:0005267">
    <property type="term" value="F:potassium channel activity"/>
    <property type="evidence" value="ECO:0000266"/>
    <property type="project" value="RGD"/>
</dbReference>
<dbReference type="GO" id="GO:0022841">
    <property type="term" value="F:potassium ion leak channel activity"/>
    <property type="evidence" value="ECO:0000318"/>
    <property type="project" value="GO_Central"/>
</dbReference>
<dbReference type="GO" id="GO:0046982">
    <property type="term" value="F:protein heterodimerization activity"/>
    <property type="evidence" value="ECO:0000314"/>
    <property type="project" value="UniProtKB"/>
</dbReference>
<dbReference type="GO" id="GO:0005272">
    <property type="term" value="F:sodium channel activity"/>
    <property type="evidence" value="ECO:0000266"/>
    <property type="project" value="RGD"/>
</dbReference>
<dbReference type="GO" id="GO:0005249">
    <property type="term" value="F:voltage-gated potassium channel activity"/>
    <property type="evidence" value="ECO:0000266"/>
    <property type="project" value="RGD"/>
</dbReference>
<dbReference type="GO" id="GO:0071468">
    <property type="term" value="P:cellular response to acidic pH"/>
    <property type="evidence" value="ECO:0000266"/>
    <property type="project" value="RGD"/>
</dbReference>
<dbReference type="GO" id="GO:2000859">
    <property type="term" value="P:negative regulation of aldosterone secretion"/>
    <property type="evidence" value="ECO:0000250"/>
    <property type="project" value="UniProtKB"/>
</dbReference>
<dbReference type="GO" id="GO:1990573">
    <property type="term" value="P:potassium ion import across plasma membrane"/>
    <property type="evidence" value="ECO:0000266"/>
    <property type="project" value="RGD"/>
</dbReference>
<dbReference type="GO" id="GO:0006813">
    <property type="term" value="P:potassium ion transport"/>
    <property type="evidence" value="ECO:0000314"/>
    <property type="project" value="RGD"/>
</dbReference>
<dbReference type="GO" id="GO:0099605">
    <property type="term" value="P:regulation of action potential firing rate"/>
    <property type="evidence" value="ECO:0000250"/>
    <property type="project" value="UniProtKB"/>
</dbReference>
<dbReference type="GO" id="GO:0060075">
    <property type="term" value="P:regulation of resting membrane potential"/>
    <property type="evidence" value="ECO:0000250"/>
    <property type="project" value="UniProtKB"/>
</dbReference>
<dbReference type="GO" id="GO:0007601">
    <property type="term" value="P:visual perception"/>
    <property type="evidence" value="ECO:0000250"/>
    <property type="project" value="UniProtKB"/>
</dbReference>
<dbReference type="FunFam" id="1.10.287.70:FF:000057">
    <property type="entry name" value="Potassium channel subfamily K member"/>
    <property type="match status" value="1"/>
</dbReference>
<dbReference type="Gene3D" id="1.10.287.70">
    <property type="match status" value="1"/>
</dbReference>
<dbReference type="InterPro" id="IPR003280">
    <property type="entry name" value="2pore_dom_K_chnl"/>
</dbReference>
<dbReference type="InterPro" id="IPR003092">
    <property type="entry name" value="2pore_dom_K_chnl_TASK"/>
</dbReference>
<dbReference type="InterPro" id="IPR013099">
    <property type="entry name" value="K_chnl_dom"/>
</dbReference>
<dbReference type="InterPro" id="IPR005407">
    <property type="entry name" value="KCNK9"/>
</dbReference>
<dbReference type="PANTHER" id="PTHR11003:SF75">
    <property type="entry name" value="POTASSIUM CHANNEL SUBFAMILY K MEMBER 9"/>
    <property type="match status" value="1"/>
</dbReference>
<dbReference type="PANTHER" id="PTHR11003">
    <property type="entry name" value="POTASSIUM CHANNEL, SUBFAMILY K"/>
    <property type="match status" value="1"/>
</dbReference>
<dbReference type="Pfam" id="PF07885">
    <property type="entry name" value="Ion_trans_2"/>
    <property type="match status" value="2"/>
</dbReference>
<dbReference type="PRINTS" id="PR01333">
    <property type="entry name" value="2POREKCHANEL"/>
</dbReference>
<dbReference type="PRINTS" id="PR01585">
    <property type="entry name" value="TASK3CHANNEL"/>
</dbReference>
<dbReference type="PRINTS" id="PR01095">
    <property type="entry name" value="TASKCHANNEL"/>
</dbReference>
<dbReference type="SUPFAM" id="SSF81324">
    <property type="entry name" value="Voltage-gated potassium channels"/>
    <property type="match status" value="2"/>
</dbReference>
<accession>Q9ES08</accession>
<accession>Q923V6</accession>
<accession>Q9JLD4</accession>
<feature type="chain" id="PRO_0000101756" description="Potassium channel subfamily K member 9">
    <location>
        <begin position="1"/>
        <end position="396"/>
    </location>
</feature>
<feature type="topological domain" description="Cytoplasmic" evidence="4">
    <location>
        <begin position="1"/>
        <end position="8"/>
    </location>
</feature>
<feature type="transmembrane region" description="Helical" evidence="4">
    <location>
        <begin position="9"/>
        <end position="29"/>
    </location>
</feature>
<feature type="topological domain" description="Extracellular" evidence="4">
    <location>
        <begin position="30"/>
        <end position="88"/>
    </location>
</feature>
<feature type="intramembrane region" description="Pore-forming; Name=Pore-forming 1" evidence="4">
    <location>
        <begin position="89"/>
        <end position="101"/>
    </location>
</feature>
<feature type="topological domain" description="Extracellular" evidence="4">
    <location>
        <begin position="102"/>
        <end position="107"/>
    </location>
</feature>
<feature type="transmembrane region" description="Helical" evidence="4">
    <location>
        <begin position="108"/>
        <end position="128"/>
    </location>
</feature>
<feature type="topological domain" description="Cytoplasmic" evidence="4">
    <location>
        <begin position="129"/>
        <end position="158"/>
    </location>
</feature>
<feature type="transmembrane region" description="Helical" evidence="4">
    <location>
        <begin position="159"/>
        <end position="179"/>
    </location>
</feature>
<feature type="topological domain" description="Extracellular" evidence="4">
    <location>
        <begin position="180"/>
        <end position="194"/>
    </location>
</feature>
<feature type="intramembrane region" description="Pore-forming; Name=Pore-forming 2" evidence="4">
    <location>
        <begin position="195"/>
        <end position="207"/>
    </location>
</feature>
<feature type="topological domain" description="Extracellular" evidence="4">
    <location>
        <begin position="208"/>
        <end position="218"/>
    </location>
</feature>
<feature type="transmembrane region" description="Helical" evidence="4">
    <location>
        <begin position="219"/>
        <end position="239"/>
    </location>
</feature>
<feature type="topological domain" description="Cytoplasmic" evidence="4">
    <location>
        <begin position="240"/>
        <end position="396"/>
    </location>
</feature>
<feature type="region of interest" description="Selectivity filter 1" evidence="3">
    <location>
        <begin position="93"/>
        <end position="98"/>
    </location>
</feature>
<feature type="region of interest" description="Selectivity filter 2" evidence="3">
    <location>
        <begin position="199"/>
        <end position="204"/>
    </location>
</feature>
<feature type="region of interest" description="X-gate" evidence="3">
    <location>
        <begin position="243"/>
        <end position="248"/>
    </location>
</feature>
<feature type="binding site" evidence="3">
    <location>
        <position position="93"/>
    </location>
    <ligand>
        <name>K(+)</name>
        <dbReference type="ChEBI" id="CHEBI:29103"/>
        <label>1</label>
    </ligand>
</feature>
<feature type="binding site" evidence="1">
    <location>
        <position position="93"/>
    </location>
    <ligand>
        <name>K(+)</name>
        <dbReference type="ChEBI" id="CHEBI:29103"/>
        <label>4</label>
    </ligand>
</feature>
<feature type="binding site" evidence="1">
    <location>
        <position position="94"/>
    </location>
    <ligand>
        <name>K(+)</name>
        <dbReference type="ChEBI" id="CHEBI:29103"/>
        <label>1</label>
    </ligand>
</feature>
<feature type="binding site" evidence="1">
    <location>
        <position position="94"/>
    </location>
    <ligand>
        <name>K(+)</name>
        <dbReference type="ChEBI" id="CHEBI:29103"/>
        <label>2</label>
    </ligand>
</feature>
<feature type="binding site" evidence="1">
    <location>
        <position position="95"/>
    </location>
    <ligand>
        <name>K(+)</name>
        <dbReference type="ChEBI" id="CHEBI:29103"/>
        <label>2</label>
    </ligand>
</feature>
<feature type="binding site" evidence="1">
    <location>
        <position position="95"/>
    </location>
    <ligand>
        <name>K(+)</name>
        <dbReference type="ChEBI" id="CHEBI:29103"/>
        <label>3</label>
    </ligand>
</feature>
<feature type="binding site" evidence="1">
    <location>
        <position position="96"/>
    </location>
    <ligand>
        <name>K(+)</name>
        <dbReference type="ChEBI" id="CHEBI:29103"/>
        <label>3</label>
    </ligand>
</feature>
<feature type="binding site" evidence="3">
    <location>
        <position position="199"/>
    </location>
    <ligand>
        <name>K(+)</name>
        <dbReference type="ChEBI" id="CHEBI:29103"/>
        <label>1</label>
    </ligand>
</feature>
<feature type="binding site" evidence="1">
    <location>
        <position position="199"/>
    </location>
    <ligand>
        <name>K(+)</name>
        <dbReference type="ChEBI" id="CHEBI:29103"/>
        <label>4</label>
    </ligand>
</feature>
<feature type="binding site" evidence="1">
    <location>
        <position position="200"/>
    </location>
    <ligand>
        <name>K(+)</name>
        <dbReference type="ChEBI" id="CHEBI:29103"/>
        <label>1</label>
    </ligand>
</feature>
<feature type="binding site" evidence="1">
    <location>
        <position position="200"/>
    </location>
    <ligand>
        <name>K(+)</name>
        <dbReference type="ChEBI" id="CHEBI:29103"/>
        <label>2</label>
    </ligand>
</feature>
<feature type="binding site" evidence="1">
    <location>
        <position position="201"/>
    </location>
    <ligand>
        <name>K(+)</name>
        <dbReference type="ChEBI" id="CHEBI:29103"/>
        <label>2</label>
    </ligand>
</feature>
<feature type="binding site" evidence="1">
    <location>
        <position position="201"/>
    </location>
    <ligand>
        <name>K(+)</name>
        <dbReference type="ChEBI" id="CHEBI:29103"/>
        <label>3</label>
    </ligand>
</feature>
<feature type="binding site" evidence="1">
    <location>
        <position position="202"/>
    </location>
    <ligand>
        <name>K(+)</name>
        <dbReference type="ChEBI" id="CHEBI:29103"/>
        <label>3</label>
    </ligand>
</feature>
<feature type="site" description="Forms a cation-pi interaction with protonated H-98, stabilizing the C-type inactivated state" evidence="3">
    <location>
        <position position="78"/>
    </location>
</feature>
<feature type="site" description="pH sensor" evidence="3">
    <location>
        <position position="98"/>
    </location>
</feature>
<feature type="glycosylation site" description="N-linked (GlcNAc...) asparagine" evidence="4">
    <location>
        <position position="53"/>
    </location>
</feature>
<feature type="mutagenesis site" description="Reduces sensitivity to alterations in external pH." evidence="5">
    <original>H</original>
    <variation>D</variation>
    <location>
        <position position="98"/>
    </location>
</feature>
<feature type="mutagenesis site" description="Acts as a dominant negative when assembled with wild-type KCNK3 or KCNK9 channel subunits, abolishing K(+) flux." evidence="10">
    <original>Y</original>
    <variation>F</variation>
    <location>
        <position position="191"/>
    </location>
</feature>
<evidence type="ECO:0000250" key="1">
    <source>
        <dbReference type="UniProtKB" id="P57789"/>
    </source>
</evidence>
<evidence type="ECO:0000250" key="2">
    <source>
        <dbReference type="UniProtKB" id="Q3LS21"/>
    </source>
</evidence>
<evidence type="ECO:0000250" key="3">
    <source>
        <dbReference type="UniProtKB" id="Q9NPC2"/>
    </source>
</evidence>
<evidence type="ECO:0000255" key="4"/>
<evidence type="ECO:0000269" key="5">
    <source>
    </source>
</evidence>
<evidence type="ECO:0000269" key="6">
    <source>
    </source>
</evidence>
<evidence type="ECO:0000269" key="7">
    <source>
    </source>
</evidence>
<evidence type="ECO:0000269" key="8">
    <source>
    </source>
</evidence>
<evidence type="ECO:0000269" key="9">
    <source>
    </source>
</evidence>
<evidence type="ECO:0000269" key="10">
    <source>
    </source>
</evidence>
<evidence type="ECO:0000303" key="11">
    <source>
    </source>
</evidence>
<evidence type="ECO:0000305" key="12"/>
<evidence type="ECO:0000312" key="13">
    <source>
        <dbReference type="RGD" id="621451"/>
    </source>
</evidence>
<keyword id="KW-1003">Cell membrane</keyword>
<keyword id="KW-0966">Cell projection</keyword>
<keyword id="KW-0325">Glycoprotein</keyword>
<keyword id="KW-0407">Ion channel</keyword>
<keyword id="KW-0406">Ion transport</keyword>
<keyword id="KW-0472">Membrane</keyword>
<keyword id="KW-0479">Metal-binding</keyword>
<keyword id="KW-0496">Mitochondrion</keyword>
<keyword id="KW-0999">Mitochondrion inner membrane</keyword>
<keyword id="KW-0630">Potassium</keyword>
<keyword id="KW-0631">Potassium channel</keyword>
<keyword id="KW-0633">Potassium transport</keyword>
<keyword id="KW-1185">Reference proteome</keyword>
<keyword id="KW-0915">Sodium</keyword>
<keyword id="KW-0894">Sodium channel</keyword>
<keyword id="KW-0739">Sodium transport</keyword>
<keyword id="KW-0812">Transmembrane</keyword>
<keyword id="KW-1133">Transmembrane helix</keyword>
<keyword id="KW-0813">Transport</keyword>
<keyword id="KW-0851">Voltage-gated channel</keyword>
<sequence>MKRQNVRTLSLIACTFTYLLVGAAVFDALESDHEMREEEKLKAEEVRLRGKYNISSDDYQQLELVILQSEPHRAGVQWKFAGSFYFAITVITTIGYGHAAPGTDAGKAFCMFYAVLGIPLTLVMFQSLGERMNTFVRYLLKRIKKCCGMRNTEVSMENMVTVGFFSCMGTLCLGAAAFSQCEDWSFFHAYYYCFITLTTIGFGDFVALQSKGALQRKPFYVAFSFMYILVGLTVIGAFLNLVVLRFLTMNTDEDLLEGEVAQILAGNPRRVVVRVPQSRKRHHPMYFLRKYGRTLCYLCFPGANWGDDDDDDDDAVENVVVTTPVPPAVAAAAAAATPGPSTRNVRATVHSVSCRVEEIPPDVLRNTYFRSPFGAIPPGMHTCGENHRLHIRRKSI</sequence>
<proteinExistence type="evidence at protein level"/>
<protein>
    <recommendedName>
        <fullName>Potassium channel subfamily K member 9</fullName>
    </recommendedName>
    <alternativeName>
        <fullName>Acid-sensitive potassium channel protein TASK-3</fullName>
    </alternativeName>
    <alternativeName>
        <fullName>TWIK-related acid-sensitive K(+) channel 3</fullName>
    </alternativeName>
    <alternativeName>
        <fullName>Two pore potassium channel KT3.2</fullName>
        <shortName>Two pore K(+) channel KT3.2</shortName>
    </alternativeName>
</protein>
<name>KCNK9_RAT</name>
<organism>
    <name type="scientific">Rattus norvegicus</name>
    <name type="common">Rat</name>
    <dbReference type="NCBI Taxonomy" id="10116"/>
    <lineage>
        <taxon>Eukaryota</taxon>
        <taxon>Metazoa</taxon>
        <taxon>Chordata</taxon>
        <taxon>Craniata</taxon>
        <taxon>Vertebrata</taxon>
        <taxon>Euteleostomi</taxon>
        <taxon>Mammalia</taxon>
        <taxon>Eutheria</taxon>
        <taxon>Euarchontoglires</taxon>
        <taxon>Glires</taxon>
        <taxon>Rodentia</taxon>
        <taxon>Myomorpha</taxon>
        <taxon>Muroidea</taxon>
        <taxon>Muridae</taxon>
        <taxon>Murinae</taxon>
        <taxon>Rattus</taxon>
    </lineage>
</organism>